<reference key="1">
    <citation type="journal article" date="2009" name="PLoS Genet.">
        <title>Organised genome dynamics in the Escherichia coli species results in highly diverse adaptive paths.</title>
        <authorList>
            <person name="Touchon M."/>
            <person name="Hoede C."/>
            <person name="Tenaillon O."/>
            <person name="Barbe V."/>
            <person name="Baeriswyl S."/>
            <person name="Bidet P."/>
            <person name="Bingen E."/>
            <person name="Bonacorsi S."/>
            <person name="Bouchier C."/>
            <person name="Bouvet O."/>
            <person name="Calteau A."/>
            <person name="Chiapello H."/>
            <person name="Clermont O."/>
            <person name="Cruveiller S."/>
            <person name="Danchin A."/>
            <person name="Diard M."/>
            <person name="Dossat C."/>
            <person name="Karoui M.E."/>
            <person name="Frapy E."/>
            <person name="Garry L."/>
            <person name="Ghigo J.M."/>
            <person name="Gilles A.M."/>
            <person name="Johnson J."/>
            <person name="Le Bouguenec C."/>
            <person name="Lescat M."/>
            <person name="Mangenot S."/>
            <person name="Martinez-Jehanne V."/>
            <person name="Matic I."/>
            <person name="Nassif X."/>
            <person name="Oztas S."/>
            <person name="Petit M.A."/>
            <person name="Pichon C."/>
            <person name="Rouy Z."/>
            <person name="Ruf C.S."/>
            <person name="Schneider D."/>
            <person name="Tourret J."/>
            <person name="Vacherie B."/>
            <person name="Vallenet D."/>
            <person name="Medigue C."/>
            <person name="Rocha E.P.C."/>
            <person name="Denamur E."/>
        </authorList>
    </citation>
    <scope>NUCLEOTIDE SEQUENCE [LARGE SCALE GENOMIC DNA]</scope>
    <source>
        <strain>ATCC 35469 / DSM 13698 / BCRC 15582 / CCUG 18766 / IAM 14443 / JCM 21226 / LMG 7866 / NBRC 102419 / NCTC 12128 / CDC 0568-73</strain>
    </source>
</reference>
<organism>
    <name type="scientific">Escherichia fergusonii (strain ATCC 35469 / DSM 13698 / CCUG 18766 / IAM 14443 / JCM 21226 / LMG 7866 / NBRC 102419 / NCTC 12128 / CDC 0568-73)</name>
    <dbReference type="NCBI Taxonomy" id="585054"/>
    <lineage>
        <taxon>Bacteria</taxon>
        <taxon>Pseudomonadati</taxon>
        <taxon>Pseudomonadota</taxon>
        <taxon>Gammaproteobacteria</taxon>
        <taxon>Enterobacterales</taxon>
        <taxon>Enterobacteriaceae</taxon>
        <taxon>Escherichia</taxon>
    </lineage>
</organism>
<evidence type="ECO:0000255" key="1">
    <source>
        <dbReference type="HAMAP-Rule" id="MF_01115"/>
    </source>
</evidence>
<name>YFEO_ESCF3</name>
<feature type="chain" id="PRO_1000137215" description="Putative ion-transport protein YfeO">
    <location>
        <begin position="1"/>
        <end position="418"/>
    </location>
</feature>
<feature type="transmembrane region" description="Helical" evidence="1">
    <location>
        <begin position="10"/>
        <end position="30"/>
    </location>
</feature>
<feature type="transmembrane region" description="Helical" evidence="1">
    <location>
        <begin position="54"/>
        <end position="74"/>
    </location>
</feature>
<feature type="transmembrane region" description="Helical" evidence="1">
    <location>
        <begin position="99"/>
        <end position="119"/>
    </location>
</feature>
<feature type="transmembrane region" description="Helical" evidence="1">
    <location>
        <begin position="120"/>
        <end position="140"/>
    </location>
</feature>
<feature type="transmembrane region" description="Helical" evidence="1">
    <location>
        <begin position="149"/>
        <end position="169"/>
    </location>
</feature>
<feature type="transmembrane region" description="Helical" evidence="1">
    <location>
        <begin position="186"/>
        <end position="206"/>
    </location>
</feature>
<feature type="transmembrane region" description="Helical" evidence="1">
    <location>
        <begin position="223"/>
        <end position="243"/>
    </location>
</feature>
<feature type="transmembrane region" description="Helical" evidence="1">
    <location>
        <begin position="258"/>
        <end position="278"/>
    </location>
</feature>
<feature type="transmembrane region" description="Helical" evidence="1">
    <location>
        <begin position="300"/>
        <end position="320"/>
    </location>
</feature>
<feature type="transmembrane region" description="Helical" evidence="1">
    <location>
        <begin position="322"/>
        <end position="342"/>
    </location>
</feature>
<feature type="transmembrane region" description="Helical" evidence="1">
    <location>
        <begin position="343"/>
        <end position="363"/>
    </location>
</feature>
<feature type="transmembrane region" description="Helical" evidence="1">
    <location>
        <begin position="386"/>
        <end position="406"/>
    </location>
</feature>
<keyword id="KW-1003">Cell membrane</keyword>
<keyword id="KW-0407">Ion channel</keyword>
<keyword id="KW-0406">Ion transport</keyword>
<keyword id="KW-0472">Membrane</keyword>
<keyword id="KW-0812">Transmembrane</keyword>
<keyword id="KW-1133">Transmembrane helix</keyword>
<keyword id="KW-0813">Transport</keyword>
<accession>B7LL87</accession>
<proteinExistence type="inferred from homology"/>
<protein>
    <recommendedName>
        <fullName evidence="1">Putative ion-transport protein YfeO</fullName>
    </recommendedName>
</protein>
<sequence>MLHPRARTMLLLSLPAVAIGIASSLILIVVMKIASVLQTLLWQRLPGTLGIAQDSPFWIIAILTLTGIAVGLVIRFSQGHAGPDPACEPLIGAPVPPSALPGLIVALILGLAGGVSLGPEHPIMTVNIALAVAIGARLLPRVNRMEWTILASAGTIGALFGTPVAAALIFSQTLNGSSEVPLWDRLFAPLMAAAAGALTTGLFFHPHFSLPIAHYGQMEMTDILSGAIVAAIAIAAGMVAVWCLPRLHAMMHQIKNPVLMLGVGGFILGILGVIAGPVSLFKGLDEMQQMVANQAFSTSDYFLLAVIKLAALVVAAASGFRGGRIFPAVFVGVALGLMLHEHVPAVPAAITVSCAILGIVLVVTRDGWLSLFMAAAVVPNTTLLPLLCIVMLPAWLLLAGKPIMMVNRPKQQPPHDNV</sequence>
<comment type="subcellular location">
    <subcellularLocation>
        <location evidence="1">Cell membrane</location>
        <topology evidence="1">Multi-pass membrane protein</topology>
    </subcellularLocation>
</comment>
<comment type="similarity">
    <text evidence="1">Belongs to the chloride channel (TC 2.A.49) family.</text>
</comment>
<gene>
    <name evidence="1" type="primary">yfeO</name>
    <name type="ordered locus">EFER_0779</name>
</gene>
<dbReference type="EMBL" id="CU928158">
    <property type="protein sequence ID" value="CAQ88315.1"/>
    <property type="molecule type" value="Genomic_DNA"/>
</dbReference>
<dbReference type="RefSeq" id="WP_000903163.1">
    <property type="nucleotide sequence ID" value="NC_011740.1"/>
</dbReference>
<dbReference type="SMR" id="B7LL87"/>
<dbReference type="KEGG" id="efe:EFER_0779"/>
<dbReference type="HOGENOM" id="CLU_053130_0_0_6"/>
<dbReference type="OrthoDB" id="2729535at2"/>
<dbReference type="Proteomes" id="UP000000745">
    <property type="component" value="Chromosome"/>
</dbReference>
<dbReference type="GO" id="GO:0005886">
    <property type="term" value="C:plasma membrane"/>
    <property type="evidence" value="ECO:0007669"/>
    <property type="project" value="UniProtKB-SubCell"/>
</dbReference>
<dbReference type="GO" id="GO:0015108">
    <property type="term" value="F:chloride transmembrane transporter activity"/>
    <property type="evidence" value="ECO:0007669"/>
    <property type="project" value="InterPro"/>
</dbReference>
<dbReference type="GO" id="GO:0005216">
    <property type="term" value="F:monoatomic ion channel activity"/>
    <property type="evidence" value="ECO:0007669"/>
    <property type="project" value="UniProtKB-UniRule"/>
</dbReference>
<dbReference type="CDD" id="cd00400">
    <property type="entry name" value="Voltage_gated_ClC"/>
    <property type="match status" value="1"/>
</dbReference>
<dbReference type="FunFam" id="1.10.3080.10:FF:000007">
    <property type="entry name" value="Putative ion-transport protein YfeO"/>
    <property type="match status" value="1"/>
</dbReference>
<dbReference type="Gene3D" id="1.10.3080.10">
    <property type="entry name" value="Clc chloride channel"/>
    <property type="match status" value="1"/>
</dbReference>
<dbReference type="HAMAP" id="MF_01115">
    <property type="entry name" value="CLC_YfeO"/>
    <property type="match status" value="1"/>
</dbReference>
<dbReference type="InterPro" id="IPR022969">
    <property type="entry name" value="Chloride_channel_YfeO"/>
</dbReference>
<dbReference type="InterPro" id="IPR014743">
    <property type="entry name" value="Cl-channel_core"/>
</dbReference>
<dbReference type="InterPro" id="IPR001807">
    <property type="entry name" value="ClC"/>
</dbReference>
<dbReference type="InterPro" id="IPR050368">
    <property type="entry name" value="ClC-type_chloride_channel"/>
</dbReference>
<dbReference type="NCBIfam" id="NF002971">
    <property type="entry name" value="PRK03655.1"/>
    <property type="match status" value="1"/>
</dbReference>
<dbReference type="PANTHER" id="PTHR43427">
    <property type="entry name" value="CHLORIDE CHANNEL PROTEIN CLC-E"/>
    <property type="match status" value="1"/>
</dbReference>
<dbReference type="PANTHER" id="PTHR43427:SF9">
    <property type="entry name" value="ION-TRANSPORT PROTEIN YFEO-RELATED"/>
    <property type="match status" value="1"/>
</dbReference>
<dbReference type="Pfam" id="PF00654">
    <property type="entry name" value="Voltage_CLC"/>
    <property type="match status" value="1"/>
</dbReference>
<dbReference type="PRINTS" id="PR00762">
    <property type="entry name" value="CLCHANNEL"/>
</dbReference>
<dbReference type="SUPFAM" id="SSF81340">
    <property type="entry name" value="Clc chloride channel"/>
    <property type="match status" value="1"/>
</dbReference>